<dbReference type="EMBL" id="CP001230">
    <property type="protein sequence ID" value="ACO03241.1"/>
    <property type="molecule type" value="Genomic_DNA"/>
</dbReference>
<dbReference type="RefSeq" id="WP_012675480.1">
    <property type="nucleotide sequence ID" value="NC_012440.1"/>
</dbReference>
<dbReference type="SMR" id="C0QQM3"/>
<dbReference type="STRING" id="123214.PERMA_1196"/>
<dbReference type="PaxDb" id="123214-PERMA_1196"/>
<dbReference type="KEGG" id="pmx:PERMA_1196"/>
<dbReference type="eggNOG" id="COG0087">
    <property type="taxonomic scope" value="Bacteria"/>
</dbReference>
<dbReference type="HOGENOM" id="CLU_044142_4_1_0"/>
<dbReference type="OrthoDB" id="9806135at2"/>
<dbReference type="Proteomes" id="UP000001366">
    <property type="component" value="Chromosome"/>
</dbReference>
<dbReference type="GO" id="GO:0022625">
    <property type="term" value="C:cytosolic large ribosomal subunit"/>
    <property type="evidence" value="ECO:0007669"/>
    <property type="project" value="TreeGrafter"/>
</dbReference>
<dbReference type="GO" id="GO:0019843">
    <property type="term" value="F:rRNA binding"/>
    <property type="evidence" value="ECO:0007669"/>
    <property type="project" value="UniProtKB-UniRule"/>
</dbReference>
<dbReference type="GO" id="GO:0003735">
    <property type="term" value="F:structural constituent of ribosome"/>
    <property type="evidence" value="ECO:0007669"/>
    <property type="project" value="InterPro"/>
</dbReference>
<dbReference type="GO" id="GO:0006412">
    <property type="term" value="P:translation"/>
    <property type="evidence" value="ECO:0007669"/>
    <property type="project" value="UniProtKB-UniRule"/>
</dbReference>
<dbReference type="FunFam" id="2.40.30.10:FF:000004">
    <property type="entry name" value="50S ribosomal protein L3"/>
    <property type="match status" value="1"/>
</dbReference>
<dbReference type="FunFam" id="3.30.160.810:FF:000001">
    <property type="entry name" value="50S ribosomal protein L3"/>
    <property type="match status" value="1"/>
</dbReference>
<dbReference type="Gene3D" id="3.30.160.810">
    <property type="match status" value="1"/>
</dbReference>
<dbReference type="Gene3D" id="2.40.30.10">
    <property type="entry name" value="Translation factors"/>
    <property type="match status" value="1"/>
</dbReference>
<dbReference type="HAMAP" id="MF_01325_B">
    <property type="entry name" value="Ribosomal_uL3_B"/>
    <property type="match status" value="1"/>
</dbReference>
<dbReference type="InterPro" id="IPR000597">
    <property type="entry name" value="Ribosomal_uL3"/>
</dbReference>
<dbReference type="InterPro" id="IPR019927">
    <property type="entry name" value="Ribosomal_uL3_bac/org-type"/>
</dbReference>
<dbReference type="InterPro" id="IPR009000">
    <property type="entry name" value="Transl_B-barrel_sf"/>
</dbReference>
<dbReference type="NCBIfam" id="TIGR03625">
    <property type="entry name" value="L3_bact"/>
    <property type="match status" value="1"/>
</dbReference>
<dbReference type="PANTHER" id="PTHR11229">
    <property type="entry name" value="50S RIBOSOMAL PROTEIN L3"/>
    <property type="match status" value="1"/>
</dbReference>
<dbReference type="PANTHER" id="PTHR11229:SF16">
    <property type="entry name" value="LARGE RIBOSOMAL SUBUNIT PROTEIN UL3C"/>
    <property type="match status" value="1"/>
</dbReference>
<dbReference type="Pfam" id="PF00297">
    <property type="entry name" value="Ribosomal_L3"/>
    <property type="match status" value="1"/>
</dbReference>
<dbReference type="SUPFAM" id="SSF50447">
    <property type="entry name" value="Translation proteins"/>
    <property type="match status" value="1"/>
</dbReference>
<organism>
    <name type="scientific">Persephonella marina (strain DSM 14350 / EX-H1)</name>
    <dbReference type="NCBI Taxonomy" id="123214"/>
    <lineage>
        <taxon>Bacteria</taxon>
        <taxon>Pseudomonadati</taxon>
        <taxon>Aquificota</taxon>
        <taxon>Aquificia</taxon>
        <taxon>Aquificales</taxon>
        <taxon>Hydrogenothermaceae</taxon>
        <taxon>Persephonella</taxon>
    </lineage>
</organism>
<accession>C0QQM3</accession>
<keyword id="KW-1185">Reference proteome</keyword>
<keyword id="KW-0687">Ribonucleoprotein</keyword>
<keyword id="KW-0689">Ribosomal protein</keyword>
<keyword id="KW-0694">RNA-binding</keyword>
<keyword id="KW-0699">rRNA-binding</keyword>
<evidence type="ECO:0000255" key="1">
    <source>
        <dbReference type="HAMAP-Rule" id="MF_01325"/>
    </source>
</evidence>
<evidence type="ECO:0000305" key="2"/>
<name>RL3_PERMH</name>
<comment type="function">
    <text evidence="1">One of the primary rRNA binding proteins, it binds directly near the 3'-end of the 23S rRNA, where it nucleates assembly of the 50S subunit.</text>
</comment>
<comment type="subunit">
    <text evidence="1">Part of the 50S ribosomal subunit. Forms a cluster with proteins L14 and L19.</text>
</comment>
<comment type="similarity">
    <text evidence="1">Belongs to the universal ribosomal protein uL3 family.</text>
</comment>
<gene>
    <name evidence="1" type="primary">rplC</name>
    <name type="ordered locus">PERMA_1196</name>
</gene>
<feature type="chain" id="PRO_1000165898" description="Large ribosomal subunit protein uL3">
    <location>
        <begin position="1"/>
        <end position="227"/>
    </location>
</feature>
<protein>
    <recommendedName>
        <fullName evidence="1">Large ribosomal subunit protein uL3</fullName>
    </recommendedName>
    <alternativeName>
        <fullName evidence="2">50S ribosomal protein L3</fullName>
    </alternativeName>
</protein>
<sequence length="227" mass="24973">MPKGIIGKKIGMTRVFKDGKAIPVTVIQVEPNYVVNIRTEDKDGYSAVVLGTGEKKEKRTPKPMLAIFKKAGLKPLRHLAEFPLKEGEQPEPGQEVKVEDVFEKGDLVDVTGTSKGRGFASAMKRWDFSGFKKSHGSRYHRAVGSIGACSDPGRVWKTKRMAGHYGNETITVQGLEVVDIIPEKNIILVKGSVPGAPKSVVKLKESVIIHRRKGKRKLERAKAVYAS</sequence>
<proteinExistence type="inferred from homology"/>
<reference key="1">
    <citation type="journal article" date="2009" name="J. Bacteriol.">
        <title>Complete and draft genome sequences of six members of the Aquificales.</title>
        <authorList>
            <person name="Reysenbach A.-L."/>
            <person name="Hamamura N."/>
            <person name="Podar M."/>
            <person name="Griffiths E."/>
            <person name="Ferreira S."/>
            <person name="Hochstein R."/>
            <person name="Heidelberg J."/>
            <person name="Johnson J."/>
            <person name="Mead D."/>
            <person name="Pohorille A."/>
            <person name="Sarmiento M."/>
            <person name="Schweighofer K."/>
            <person name="Seshadri R."/>
            <person name="Voytek M.A."/>
        </authorList>
    </citation>
    <scope>NUCLEOTIDE SEQUENCE [LARGE SCALE GENOMIC DNA]</scope>
    <source>
        <strain>DSM 14350 / EX-H1</strain>
    </source>
</reference>